<feature type="signal peptide" evidence="2">
    <location>
        <begin position="1"/>
        <end position="29"/>
    </location>
</feature>
<feature type="chain" id="PRO_0000045473" description="Bifunctional autolysin">
    <location>
        <begin position="30"/>
        <end position="1256"/>
    </location>
</feature>
<feature type="domain" description="GW 1" evidence="3">
    <location>
        <begin position="443"/>
        <end position="517"/>
    </location>
</feature>
<feature type="domain" description="GW 2" evidence="3">
    <location>
        <begin position="519"/>
        <end position="593"/>
    </location>
</feature>
<feature type="domain" description="GW 3" evidence="3">
    <location>
        <begin position="612"/>
        <end position="686"/>
    </location>
</feature>
<feature type="domain" description="GW 4" evidence="3">
    <location>
        <begin position="688"/>
        <end position="762"/>
    </location>
</feature>
<feature type="domain" description="GW 5" evidence="3">
    <location>
        <begin position="784"/>
        <end position="859"/>
    </location>
</feature>
<feature type="domain" description="GW 6" evidence="3">
    <location>
        <begin position="861"/>
        <end position="936"/>
    </location>
</feature>
<feature type="domain" description="GW 7" evidence="3">
    <location>
        <begin position="943"/>
        <end position="1017"/>
    </location>
</feature>
<feature type="region of interest" description="Disordered" evidence="4">
    <location>
        <begin position="103"/>
        <end position="151"/>
    </location>
</feature>
<feature type="region of interest" description="Disordered" evidence="4">
    <location>
        <begin position="172"/>
        <end position="219"/>
    </location>
</feature>
<feature type="region of interest" description="N-acetylmuramoyl-L-alanine amidase">
    <location>
        <begin position="199"/>
        <end position="775"/>
    </location>
</feature>
<feature type="region of interest" description="Disordered" evidence="4">
    <location>
        <begin position="419"/>
        <end position="440"/>
    </location>
</feature>
<feature type="region of interest" description="Endo-beta-N-acetylglucosaminidase">
    <location>
        <begin position="776"/>
        <end position="1256"/>
    </location>
</feature>
<feature type="compositionally biased region" description="Polar residues" evidence="4">
    <location>
        <begin position="103"/>
        <end position="138"/>
    </location>
</feature>
<feature type="compositionally biased region" description="Low complexity" evidence="4">
    <location>
        <begin position="172"/>
        <end position="196"/>
    </location>
</feature>
<feature type="compositionally biased region" description="Low complexity" evidence="4">
    <location>
        <begin position="421"/>
        <end position="439"/>
    </location>
</feature>
<sequence>MAKKFNYKLPSMVALTLVGSAVTAHQVQAAETTQDQTTNKNVLDSNKVKATTEQAKAEVKNPTQNISGTQVYQDPAIVQPKTANNKTGNAQVSQKVDTAQVNGDTRANQSATTNNTQPVAKSTSTTAPKTNTNVTNAGYSLVDDEDDNSENQINPELIKSAAKPAALETQYKTAAPKAATTSAPKAKTEATPKVTTFSASAQPRSVAATPKTSLPKYKPQVNSSINDYIRKNNLKAPKIEEDYTSYFPKYAYRNGVGRPEGIVVHDTANDRSTINGEISYMKNNYQNAFVHAFVDGDRIIETAPTDYLSWGVGAVGNPRFINVEIVHTHDYASFARSMNNYADYAATQLQYYGLKPDSAEYDGNGTVWTHYAVSKYLGGTDHADPHGYLRSHNYSYDQLYDLINEKYLIKMGKVAPWGTQSTTTPTTPSKPTTPSKPSTGKLTVAANNGVAQIKPTNSGLYTTVYDKTGKATNEVQKTFAVSKTATLGNQKFYLVQDYNSGNKFGWVKEGDVVYNTAKSPVNVNQSYSIKPGTKLYTVPWGTSKQVAGSVSGSGNQTFKASKQQQIDKSIYLYGSVNGKSGWVSKAYLVDTAKPTPTPTPKPSTPTTNNKLTVSSLNGVAQINAKNNGLFTTVYDKTGKPTKEVQKTFAVTKEASLGGNKFYLVKDYNSPTLIGWVKQGDVIYNNAKSPVNVMQTYTVKPGTKLYSVPWGTYKQEAGAVSGTGNQTFKATKQQQIDKSIYLFGTVNGKSGWVSKAYLAVPAAPKKAVAQPKTAVKAYTVTKPQTTQTVSKIAQVKPNNTGIRASVYEKTAKNGAKYADRTFYVTKERAHGNETYVLLNNTSHNIPLGWFNVKDLNVQNLGKEVKTTQKYTVNKSNNGLSMVPWGTKNQVILTGNNIAQGTFNATKQVSVGKDVYLYGTINNRTGWVNAKDLTAPTAVKPTTSAAKDYNYTYVIKNGNGYYYVTPNSDTAKYSLKAFNEQPFAVVKEQVINGQTWYYGKLSNGKLAWIKSTDLAKELIKYNQTGMALNQVAQIQAGLQYKPQVQRVPGKWTGANFNDVKHAMDTKRLAQDPALKYQFLRLDQPQNISIDKINQFLKGKGVLENQGAAFNKAAQMYGINEVYLISHALLETGNGTSQLAKGADVVNNKVVTNSNTKYHNVFGIAAYDNDPLREGIKYAKQAGWDTVSKAIVGGAKFIGNSYVKAGQNTLYKMRWNPAHPGTHQYATDVDWANINAKIIKGYYDKIGEVGKYFDIPQYK</sequence>
<protein>
    <recommendedName>
        <fullName>Bifunctional autolysin</fullName>
    </recommendedName>
    <domain>
        <recommendedName>
            <fullName>N-acetylmuramoyl-L-alanine amidase</fullName>
            <ecNumber>3.5.1.28</ecNumber>
        </recommendedName>
    </domain>
    <domain>
        <recommendedName>
            <fullName>Mannosyl-glycoprotein endo-beta-N-acetylglucosaminidase</fullName>
            <ecNumber>3.2.1.96</ecNumber>
        </recommendedName>
    </domain>
</protein>
<dbReference type="EC" id="3.5.1.28"/>
<dbReference type="EC" id="3.2.1.96"/>
<dbReference type="EMBL" id="CP000046">
    <property type="protein sequence ID" value="AAW36526.1"/>
    <property type="molecule type" value="Genomic_DNA"/>
</dbReference>
<dbReference type="RefSeq" id="WP_001074555.1">
    <property type="nucleotide sequence ID" value="NC_002951.2"/>
</dbReference>
<dbReference type="SMR" id="Q5HH31"/>
<dbReference type="CAZy" id="GH73">
    <property type="family name" value="Glycoside Hydrolase Family 73"/>
</dbReference>
<dbReference type="KEGG" id="sac:SACOL1062"/>
<dbReference type="HOGENOM" id="CLU_005906_0_0_9"/>
<dbReference type="Proteomes" id="UP000000530">
    <property type="component" value="Chromosome"/>
</dbReference>
<dbReference type="GO" id="GO:0005576">
    <property type="term" value="C:extracellular region"/>
    <property type="evidence" value="ECO:0007669"/>
    <property type="project" value="UniProtKB-SubCell"/>
</dbReference>
<dbReference type="GO" id="GO:0004040">
    <property type="term" value="F:amidase activity"/>
    <property type="evidence" value="ECO:0007669"/>
    <property type="project" value="InterPro"/>
</dbReference>
<dbReference type="GO" id="GO:0033925">
    <property type="term" value="F:mannosyl-glycoprotein endo-beta-N-acetylglucosaminidase activity"/>
    <property type="evidence" value="ECO:0007669"/>
    <property type="project" value="UniProtKB-EC"/>
</dbReference>
<dbReference type="GO" id="GO:0008745">
    <property type="term" value="F:N-acetylmuramoyl-L-alanine amidase activity"/>
    <property type="evidence" value="ECO:0007669"/>
    <property type="project" value="UniProtKB-EC"/>
</dbReference>
<dbReference type="GO" id="GO:0071555">
    <property type="term" value="P:cell wall organization"/>
    <property type="evidence" value="ECO:0007669"/>
    <property type="project" value="UniProtKB-KW"/>
</dbReference>
<dbReference type="GO" id="GO:0009253">
    <property type="term" value="P:peptidoglycan catabolic process"/>
    <property type="evidence" value="ECO:0007669"/>
    <property type="project" value="InterPro"/>
</dbReference>
<dbReference type="CDD" id="cd06583">
    <property type="entry name" value="PGRP"/>
    <property type="match status" value="1"/>
</dbReference>
<dbReference type="Gene3D" id="1.10.530.10">
    <property type="match status" value="1"/>
</dbReference>
<dbReference type="Gene3D" id="2.30.30.170">
    <property type="match status" value="7"/>
</dbReference>
<dbReference type="Gene3D" id="3.40.80.10">
    <property type="entry name" value="Peptidoglycan recognition protein-like"/>
    <property type="match status" value="1"/>
</dbReference>
<dbReference type="InterPro" id="IPR036505">
    <property type="entry name" value="Amidase/PGRP_sf"/>
</dbReference>
<dbReference type="InterPro" id="IPR002502">
    <property type="entry name" value="Amidase_domain"/>
</dbReference>
<dbReference type="InterPro" id="IPR025987">
    <property type="entry name" value="GW_dom"/>
</dbReference>
<dbReference type="InterPro" id="IPR038200">
    <property type="entry name" value="GW_dom_sf"/>
</dbReference>
<dbReference type="InterPro" id="IPR002901">
    <property type="entry name" value="MGlyc_endo_b_GlcNAc-like_dom"/>
</dbReference>
<dbReference type="Pfam" id="PF01510">
    <property type="entry name" value="Amidase_2"/>
    <property type="match status" value="1"/>
</dbReference>
<dbReference type="Pfam" id="PF01832">
    <property type="entry name" value="Glucosaminidase"/>
    <property type="match status" value="1"/>
</dbReference>
<dbReference type="Pfam" id="PF13457">
    <property type="entry name" value="GW"/>
    <property type="match status" value="6"/>
</dbReference>
<dbReference type="SMART" id="SM00644">
    <property type="entry name" value="Ami_2"/>
    <property type="match status" value="1"/>
</dbReference>
<dbReference type="SMART" id="SM00047">
    <property type="entry name" value="LYZ2"/>
    <property type="match status" value="1"/>
</dbReference>
<dbReference type="SUPFAM" id="SSF55846">
    <property type="entry name" value="N-acetylmuramoyl-L-alanine amidase-like"/>
    <property type="match status" value="1"/>
</dbReference>
<dbReference type="SUPFAM" id="SSF82057">
    <property type="entry name" value="Prokaryotic SH3-related domain"/>
    <property type="match status" value="1"/>
</dbReference>
<dbReference type="PROSITE" id="PS51780">
    <property type="entry name" value="GW"/>
    <property type="match status" value="7"/>
</dbReference>
<comment type="function">
    <text evidence="1">Endohydrolysis of the di-N-acetylchitobiosyl unit in high-mannose glycopeptides and glycoproteins containing the -[(Man)5(GlcNAc)2]-Asn structure. One N-acetyl-D-glucosamine residue remains attached to the protein; the rest of the oligosaccharide is released intact. Cleaves the peptidoglycan connecting the daughter cells at the end of the cell division cycle, resulting in the separation of the two newly divided cells. Acts as an autolysin in penicillin-induced lysis (By similarity).</text>
</comment>
<comment type="catalytic activity">
    <reaction>
        <text>Hydrolyzes the link between N-acetylmuramoyl residues and L-amino acid residues in certain cell-wall glycopeptides.</text>
        <dbReference type="EC" id="3.5.1.28"/>
    </reaction>
</comment>
<comment type="catalytic activity">
    <reaction>
        <text>an N(4)-(oligosaccharide-(1-&gt;3)-[oligosaccharide-(1-&gt;6)]-beta-D-Man-(1-&gt;4)-beta-D-GlcNAc-(1-&gt;4)-alpha-D-GlcNAc)-L-asparaginyl-[protein] + H2O = an oligosaccharide-(1-&gt;3)-[oligosaccharide-(1-&gt;6)]-beta-D-Man-(1-&gt;4)-D-GlcNAc + N(4)-(N-acetyl-beta-D-glucosaminyl)-L-asparaginyl-[protein]</text>
        <dbReference type="Rhea" id="RHEA:73067"/>
        <dbReference type="Rhea" id="RHEA-COMP:12603"/>
        <dbReference type="Rhea" id="RHEA-COMP:18176"/>
        <dbReference type="ChEBI" id="CHEBI:15377"/>
        <dbReference type="ChEBI" id="CHEBI:132248"/>
        <dbReference type="ChEBI" id="CHEBI:192714"/>
        <dbReference type="ChEBI" id="CHEBI:192715"/>
        <dbReference type="EC" id="3.2.1.96"/>
    </reaction>
</comment>
<comment type="subunit">
    <text evidence="1">Oligomer; forms a ring structure at the cell surface which is important for efficient partitioning of daughter cells after cell division.</text>
</comment>
<comment type="subcellular location">
    <subcellularLocation>
        <location evidence="1">Secreted</location>
    </subcellularLocation>
    <text evidence="1">Secreted, and then anchored on the cell surface at the peripheral cell wall above the completed septum (septal region), for the next cell division cycle.</text>
</comment>
<comment type="domain">
    <text evidence="1">The GW domains are responsible for directing the proteins to the septal region.</text>
</comment>
<comment type="PTM">
    <text evidence="1">Undergoes proteolytic processing to generate the two extracellular lytic enzymes, probably at the septal region on the cell surface.</text>
</comment>
<comment type="similarity">
    <text evidence="5">In the N-terminal section; belongs to the N-acetylmuramoyl-L-alanine amidase 2 family.</text>
</comment>
<comment type="similarity">
    <text evidence="5">In the C-terminal section; belongs to the glycosyl hydrolase 73 family.</text>
</comment>
<evidence type="ECO:0000250" key="1"/>
<evidence type="ECO:0000255" key="2"/>
<evidence type="ECO:0000255" key="3">
    <source>
        <dbReference type="PROSITE-ProRule" id="PRU01116"/>
    </source>
</evidence>
<evidence type="ECO:0000256" key="4">
    <source>
        <dbReference type="SAM" id="MobiDB-lite"/>
    </source>
</evidence>
<evidence type="ECO:0000305" key="5"/>
<reference key="1">
    <citation type="journal article" date="2005" name="J. Bacteriol.">
        <title>Insights on evolution of virulence and resistance from the complete genome analysis of an early methicillin-resistant Staphylococcus aureus strain and a biofilm-producing methicillin-resistant Staphylococcus epidermidis strain.</title>
        <authorList>
            <person name="Gill S.R."/>
            <person name="Fouts D.E."/>
            <person name="Archer G.L."/>
            <person name="Mongodin E.F."/>
            <person name="DeBoy R.T."/>
            <person name="Ravel J."/>
            <person name="Paulsen I.T."/>
            <person name="Kolonay J.F."/>
            <person name="Brinkac L.M."/>
            <person name="Beanan M.J."/>
            <person name="Dodson R.J."/>
            <person name="Daugherty S.C."/>
            <person name="Madupu R."/>
            <person name="Angiuoli S.V."/>
            <person name="Durkin A.S."/>
            <person name="Haft D.H."/>
            <person name="Vamathevan J.J."/>
            <person name="Khouri H."/>
            <person name="Utterback T.R."/>
            <person name="Lee C."/>
            <person name="Dimitrov G."/>
            <person name="Jiang L."/>
            <person name="Qin H."/>
            <person name="Weidman J."/>
            <person name="Tran K."/>
            <person name="Kang K.H."/>
            <person name="Hance I.R."/>
            <person name="Nelson K.E."/>
            <person name="Fraser C.M."/>
        </authorList>
    </citation>
    <scope>NUCLEOTIDE SEQUENCE [LARGE SCALE GENOMIC DNA]</scope>
    <source>
        <strain>COL</strain>
    </source>
</reference>
<keyword id="KW-0961">Cell wall biogenesis/degradation</keyword>
<keyword id="KW-0378">Hydrolase</keyword>
<keyword id="KW-0511">Multifunctional enzyme</keyword>
<keyword id="KW-0677">Repeat</keyword>
<keyword id="KW-0964">Secreted</keyword>
<keyword id="KW-0732">Signal</keyword>
<name>ATL_STAAC</name>
<proteinExistence type="inferred from homology"/>
<accession>Q5HH31</accession>
<organism>
    <name type="scientific">Staphylococcus aureus (strain COL)</name>
    <dbReference type="NCBI Taxonomy" id="93062"/>
    <lineage>
        <taxon>Bacteria</taxon>
        <taxon>Bacillati</taxon>
        <taxon>Bacillota</taxon>
        <taxon>Bacilli</taxon>
        <taxon>Bacillales</taxon>
        <taxon>Staphylococcaceae</taxon>
        <taxon>Staphylococcus</taxon>
    </lineage>
</organism>
<gene>
    <name type="primary">atl</name>
    <name type="synonym">nag</name>
    <name type="ordered locus">SACOL1062</name>
</gene>